<proteinExistence type="inferred from homology"/>
<sequence length="183" mass="19117">MSIEALRARLPDYAHDLGTNLALLVDDPALDPEARWGCFVASACAVGEPQTLRAIDAAATAAGLTAEANRAARKAAAMMAMTNVYFRAVHLMEGAAYQALPCRLRLNRLAHAGARGVTYDLSCVAVSAINGCGACLDSHEADLRGRGVEPTQIQAALRIAAVVSAVARTLAAEAALHPQNLEI</sequence>
<keyword id="KW-0049">Antioxidant</keyword>
<keyword id="KW-1015">Disulfide bond</keyword>
<keyword id="KW-0560">Oxidoreductase</keyword>
<keyword id="KW-0575">Peroxidase</keyword>
<keyword id="KW-0676">Redox-active center</keyword>
<keyword id="KW-1185">Reference proteome</keyword>
<feature type="chain" id="PRO_0000359483" description="Alkyl hydroperoxide reductase AhpD">
    <location>
        <begin position="1"/>
        <end position="183"/>
    </location>
</feature>
<feature type="active site" description="Proton donor" evidence="2">
    <location>
        <position position="132"/>
    </location>
</feature>
<feature type="active site" description="Cysteine sulfenic acid (-SOH) intermediate" evidence="2">
    <location>
        <position position="135"/>
    </location>
</feature>
<feature type="disulfide bond" evidence="1">
    <location>
        <begin position="132"/>
        <end position="135"/>
    </location>
</feature>
<feature type="disulfide bond" description="Interchain (with AhpC); in linked form" evidence="2">
    <location>
        <position position="135"/>
    </location>
</feature>
<accession>Q9A268</accession>
<name>AHPD_CAUVC</name>
<comment type="function">
    <text evidence="2">Antioxidant protein with alkyl hydroperoxidase activity. Required for the reduction of the AhpC active site cysteine residues and for the regeneration of the AhpC enzyme activity.</text>
</comment>
<comment type="catalytic activity">
    <reaction evidence="2">
        <text>N(6)-[(R)-dihydrolipoyl]-L-lysyl-[lipoyl-carrier protein] + a hydroperoxide = N(6)-[(R)-lipoyl]-L-lysyl-[lipoyl-carrier protein] + an alcohol + H2O</text>
        <dbReference type="Rhea" id="RHEA:62636"/>
        <dbReference type="Rhea" id="RHEA-COMP:10502"/>
        <dbReference type="Rhea" id="RHEA-COMP:16355"/>
        <dbReference type="ChEBI" id="CHEBI:15377"/>
        <dbReference type="ChEBI" id="CHEBI:30879"/>
        <dbReference type="ChEBI" id="CHEBI:35924"/>
        <dbReference type="ChEBI" id="CHEBI:83099"/>
        <dbReference type="ChEBI" id="CHEBI:83100"/>
        <dbReference type="EC" id="1.11.1.28"/>
    </reaction>
</comment>
<comment type="similarity">
    <text evidence="2">Belongs to the AhpD family.</text>
</comment>
<reference key="1">
    <citation type="journal article" date="2001" name="Proc. Natl. Acad. Sci. U.S.A.">
        <title>Complete genome sequence of Caulobacter crescentus.</title>
        <authorList>
            <person name="Nierman W.C."/>
            <person name="Feldblyum T.V."/>
            <person name="Laub M.T."/>
            <person name="Paulsen I.T."/>
            <person name="Nelson K.E."/>
            <person name="Eisen J.A."/>
            <person name="Heidelberg J.F."/>
            <person name="Alley M.R.K."/>
            <person name="Ohta N."/>
            <person name="Maddock J.R."/>
            <person name="Potocka I."/>
            <person name="Nelson W.C."/>
            <person name="Newton A."/>
            <person name="Stephens C."/>
            <person name="Phadke N.D."/>
            <person name="Ely B."/>
            <person name="DeBoy R.T."/>
            <person name="Dodson R.J."/>
            <person name="Durkin A.S."/>
            <person name="Gwinn M.L."/>
            <person name="Haft D.H."/>
            <person name="Kolonay J.F."/>
            <person name="Smit J."/>
            <person name="Craven M.B."/>
            <person name="Khouri H.M."/>
            <person name="Shetty J."/>
            <person name="Berry K.J."/>
            <person name="Utterback T.R."/>
            <person name="Tran K."/>
            <person name="Wolf A.M."/>
            <person name="Vamathevan J.J."/>
            <person name="Ermolaeva M.D."/>
            <person name="White O."/>
            <person name="Salzberg S.L."/>
            <person name="Venter J.C."/>
            <person name="Shapiro L."/>
            <person name="Fraser C.M."/>
        </authorList>
    </citation>
    <scope>NUCLEOTIDE SEQUENCE [LARGE SCALE GENOMIC DNA]</scope>
    <source>
        <strain>ATCC 19089 / CIP 103742 / CB 15</strain>
    </source>
</reference>
<dbReference type="EC" id="1.11.1.28" evidence="2"/>
<dbReference type="EMBL" id="AE005673">
    <property type="protein sequence ID" value="AAK25660.1"/>
    <property type="molecule type" value="Genomic_DNA"/>
</dbReference>
<dbReference type="PIR" id="H87707">
    <property type="entry name" value="H87707"/>
</dbReference>
<dbReference type="RefSeq" id="NP_422492.1">
    <property type="nucleotide sequence ID" value="NC_002696.2"/>
</dbReference>
<dbReference type="RefSeq" id="WP_010921525.1">
    <property type="nucleotide sequence ID" value="NC_002696.2"/>
</dbReference>
<dbReference type="SMR" id="Q9A268"/>
<dbReference type="STRING" id="190650.CC_3698"/>
<dbReference type="PeroxiBase" id="4612">
    <property type="entry name" value="CcrAhpD"/>
</dbReference>
<dbReference type="EnsemblBacteria" id="AAK25660">
    <property type="protein sequence ID" value="AAK25660"/>
    <property type="gene ID" value="CC_3698"/>
</dbReference>
<dbReference type="KEGG" id="ccr:CC_3698"/>
<dbReference type="PATRIC" id="fig|190650.5.peg.3698"/>
<dbReference type="eggNOG" id="COG2128">
    <property type="taxonomic scope" value="Bacteria"/>
</dbReference>
<dbReference type="HOGENOM" id="CLU_105328_0_0_5"/>
<dbReference type="BioCyc" id="CAULO:CC3698-MONOMER"/>
<dbReference type="Proteomes" id="UP000001816">
    <property type="component" value="Chromosome"/>
</dbReference>
<dbReference type="GO" id="GO:0008785">
    <property type="term" value="F:alkyl hydroperoxide reductase activity"/>
    <property type="evidence" value="ECO:0007669"/>
    <property type="project" value="UniProtKB-UniRule"/>
</dbReference>
<dbReference type="GO" id="GO:0032843">
    <property type="term" value="F:hydroperoxide reductase activity"/>
    <property type="evidence" value="ECO:0007669"/>
    <property type="project" value="InterPro"/>
</dbReference>
<dbReference type="GO" id="GO:0051920">
    <property type="term" value="F:peroxiredoxin activity"/>
    <property type="evidence" value="ECO:0007669"/>
    <property type="project" value="InterPro"/>
</dbReference>
<dbReference type="GO" id="GO:0006979">
    <property type="term" value="P:response to oxidative stress"/>
    <property type="evidence" value="ECO:0007669"/>
    <property type="project" value="InterPro"/>
</dbReference>
<dbReference type="Gene3D" id="1.20.1290.10">
    <property type="entry name" value="AhpD-like"/>
    <property type="match status" value="1"/>
</dbReference>
<dbReference type="HAMAP" id="MF_01676">
    <property type="entry name" value="AhpD"/>
    <property type="match status" value="1"/>
</dbReference>
<dbReference type="InterPro" id="IPR004674">
    <property type="entry name" value="AhpD"/>
</dbReference>
<dbReference type="InterPro" id="IPR029032">
    <property type="entry name" value="AhpD-like"/>
</dbReference>
<dbReference type="InterPro" id="IPR004675">
    <property type="entry name" value="AhpD_core"/>
</dbReference>
<dbReference type="InterPro" id="IPR003779">
    <property type="entry name" value="CMD-like"/>
</dbReference>
<dbReference type="NCBIfam" id="TIGR00777">
    <property type="entry name" value="ahpD"/>
    <property type="match status" value="1"/>
</dbReference>
<dbReference type="NCBIfam" id="TIGR00778">
    <property type="entry name" value="ahpD_dom"/>
    <property type="match status" value="1"/>
</dbReference>
<dbReference type="Pfam" id="PF02627">
    <property type="entry name" value="CMD"/>
    <property type="match status" value="1"/>
</dbReference>
<dbReference type="SUPFAM" id="SSF69118">
    <property type="entry name" value="AhpD-like"/>
    <property type="match status" value="1"/>
</dbReference>
<gene>
    <name evidence="2" type="primary">ahpD</name>
    <name type="ordered locus">CC_3698</name>
</gene>
<protein>
    <recommendedName>
        <fullName evidence="2">Alkyl hydroperoxide reductase AhpD</fullName>
        <ecNumber evidence="2">1.11.1.28</ecNumber>
    </recommendedName>
    <alternativeName>
        <fullName evidence="2">Alkylhydroperoxidase AhpD</fullName>
    </alternativeName>
</protein>
<organism>
    <name type="scientific">Caulobacter vibrioides (strain ATCC 19089 / CIP 103742 / CB 15)</name>
    <name type="common">Caulobacter crescentus</name>
    <dbReference type="NCBI Taxonomy" id="190650"/>
    <lineage>
        <taxon>Bacteria</taxon>
        <taxon>Pseudomonadati</taxon>
        <taxon>Pseudomonadota</taxon>
        <taxon>Alphaproteobacteria</taxon>
        <taxon>Caulobacterales</taxon>
        <taxon>Caulobacteraceae</taxon>
        <taxon>Caulobacter</taxon>
    </lineage>
</organism>
<evidence type="ECO:0000250" key="1"/>
<evidence type="ECO:0000255" key="2">
    <source>
        <dbReference type="HAMAP-Rule" id="MF_01676"/>
    </source>
</evidence>